<feature type="chain" id="PRO_0000331985" description="Chaperonin GroEL 2">
    <location>
        <begin position="1"/>
        <end position="546"/>
    </location>
</feature>
<feature type="region of interest" description="Disordered" evidence="2">
    <location>
        <begin position="527"/>
        <end position="546"/>
    </location>
</feature>
<feature type="compositionally biased region" description="Gly residues" evidence="2">
    <location>
        <begin position="535"/>
        <end position="546"/>
    </location>
</feature>
<feature type="binding site" evidence="1">
    <location>
        <begin position="30"/>
        <end position="33"/>
    </location>
    <ligand>
        <name>ATP</name>
        <dbReference type="ChEBI" id="CHEBI:30616"/>
    </ligand>
</feature>
<feature type="binding site" evidence="1">
    <location>
        <position position="51"/>
    </location>
    <ligand>
        <name>ATP</name>
        <dbReference type="ChEBI" id="CHEBI:30616"/>
    </ligand>
</feature>
<feature type="binding site" evidence="1">
    <location>
        <begin position="87"/>
        <end position="91"/>
    </location>
    <ligand>
        <name>ATP</name>
        <dbReference type="ChEBI" id="CHEBI:30616"/>
    </ligand>
</feature>
<feature type="binding site" evidence="1">
    <location>
        <position position="415"/>
    </location>
    <ligand>
        <name>ATP</name>
        <dbReference type="ChEBI" id="CHEBI:30616"/>
    </ligand>
</feature>
<feature type="binding site" evidence="1">
    <location>
        <position position="495"/>
    </location>
    <ligand>
        <name>ATP</name>
        <dbReference type="ChEBI" id="CHEBI:30616"/>
    </ligand>
</feature>
<proteinExistence type="inferred from homology"/>
<gene>
    <name evidence="1" type="primary">groEL2</name>
    <name evidence="1" type="synonym">groL2</name>
    <name type="ordered locus">Bamb_5271</name>
</gene>
<sequence>MAAKEIIFSDVARTKLTEGVNILANAVKVTLGPKGRNVVLERSFGAPVVTKDGVSVAKEIELADKLQNIGAQLVKEVASRTSDAAGDGTTTATVLAQAIVREGQKYVAAGLNPLDLKRGIDKAVAAAVDALKTISKPTTTSKEIAQVATISANGEESIGQRIAEAIDRVGKEGVITVEDGKSLADELDVVEGLQFDRGYLSPYFINNPDKQIAEIENPYILLHDKKISNIRDLLPVLEQVAKSGRPLLIIAEDVEGEALATLVVNNIRGILKTVAVKAPGFGDRRKALLEDIAILTGGQVVAEETGLALEKATLAELGQAKRIEVGKENTTVIDGAGDAKNIEARVKQIRVQIDEATSDYDREKLQERVAKLAGGVAVIKVGGATEIEVKEKKDRVDDALHATRAAVEEGIVPGGGVALIRVRQAIRELKGANADQDAGIKIVLRALEEPLRQIVTNAGEEASVVVAKVAEGSGNFGYNAQTGEYGDLVESGVLDPTKVTRTALQNAASVAGLLLTTDATVFEAPKDAAPATAPGGPGAGGPGFDF</sequence>
<dbReference type="EC" id="5.6.1.7" evidence="1"/>
<dbReference type="EMBL" id="CP000441">
    <property type="protein sequence ID" value="ABI90818.1"/>
    <property type="molecule type" value="Genomic_DNA"/>
</dbReference>
<dbReference type="RefSeq" id="WP_011660194.1">
    <property type="nucleotide sequence ID" value="NC_008391.1"/>
</dbReference>
<dbReference type="SMR" id="Q0B4V5"/>
<dbReference type="GeneID" id="93088199"/>
<dbReference type="KEGG" id="bam:Bamb_5271"/>
<dbReference type="PATRIC" id="fig|339670.21.peg.5674"/>
<dbReference type="eggNOG" id="COG0459">
    <property type="taxonomic scope" value="Bacteria"/>
</dbReference>
<dbReference type="Proteomes" id="UP000000662">
    <property type="component" value="Chromosome 2"/>
</dbReference>
<dbReference type="GO" id="GO:0005737">
    <property type="term" value="C:cytoplasm"/>
    <property type="evidence" value="ECO:0007669"/>
    <property type="project" value="UniProtKB-SubCell"/>
</dbReference>
<dbReference type="GO" id="GO:0005524">
    <property type="term" value="F:ATP binding"/>
    <property type="evidence" value="ECO:0007669"/>
    <property type="project" value="UniProtKB-UniRule"/>
</dbReference>
<dbReference type="GO" id="GO:0140662">
    <property type="term" value="F:ATP-dependent protein folding chaperone"/>
    <property type="evidence" value="ECO:0007669"/>
    <property type="project" value="InterPro"/>
</dbReference>
<dbReference type="GO" id="GO:0016853">
    <property type="term" value="F:isomerase activity"/>
    <property type="evidence" value="ECO:0007669"/>
    <property type="project" value="UniProtKB-KW"/>
</dbReference>
<dbReference type="GO" id="GO:0051082">
    <property type="term" value="F:unfolded protein binding"/>
    <property type="evidence" value="ECO:0007669"/>
    <property type="project" value="UniProtKB-UniRule"/>
</dbReference>
<dbReference type="GO" id="GO:0042026">
    <property type="term" value="P:protein refolding"/>
    <property type="evidence" value="ECO:0007669"/>
    <property type="project" value="UniProtKB-UniRule"/>
</dbReference>
<dbReference type="CDD" id="cd03344">
    <property type="entry name" value="GroEL"/>
    <property type="match status" value="1"/>
</dbReference>
<dbReference type="FunFam" id="3.50.7.10:FF:000001">
    <property type="entry name" value="60 kDa chaperonin"/>
    <property type="match status" value="1"/>
</dbReference>
<dbReference type="Gene3D" id="3.50.7.10">
    <property type="entry name" value="GroEL"/>
    <property type="match status" value="1"/>
</dbReference>
<dbReference type="Gene3D" id="1.10.560.10">
    <property type="entry name" value="GroEL-like equatorial domain"/>
    <property type="match status" value="1"/>
</dbReference>
<dbReference type="Gene3D" id="3.30.260.10">
    <property type="entry name" value="TCP-1-like chaperonin intermediate domain"/>
    <property type="match status" value="1"/>
</dbReference>
<dbReference type="HAMAP" id="MF_00600">
    <property type="entry name" value="CH60"/>
    <property type="match status" value="1"/>
</dbReference>
<dbReference type="InterPro" id="IPR018370">
    <property type="entry name" value="Chaperonin_Cpn60_CS"/>
</dbReference>
<dbReference type="InterPro" id="IPR001844">
    <property type="entry name" value="Cpn60/GroEL"/>
</dbReference>
<dbReference type="InterPro" id="IPR002423">
    <property type="entry name" value="Cpn60/GroEL/TCP-1"/>
</dbReference>
<dbReference type="InterPro" id="IPR027409">
    <property type="entry name" value="GroEL-like_apical_dom_sf"/>
</dbReference>
<dbReference type="InterPro" id="IPR027413">
    <property type="entry name" value="GROEL-like_equatorial_sf"/>
</dbReference>
<dbReference type="InterPro" id="IPR027410">
    <property type="entry name" value="TCP-1-like_intermed_sf"/>
</dbReference>
<dbReference type="NCBIfam" id="TIGR02348">
    <property type="entry name" value="GroEL"/>
    <property type="match status" value="1"/>
</dbReference>
<dbReference type="NCBIfam" id="NF000592">
    <property type="entry name" value="PRK00013.1"/>
    <property type="match status" value="1"/>
</dbReference>
<dbReference type="NCBIfam" id="NF009487">
    <property type="entry name" value="PRK12849.1"/>
    <property type="match status" value="1"/>
</dbReference>
<dbReference type="NCBIfam" id="NF009488">
    <property type="entry name" value="PRK12850.1"/>
    <property type="match status" value="1"/>
</dbReference>
<dbReference type="NCBIfam" id="NF009489">
    <property type="entry name" value="PRK12851.1"/>
    <property type="match status" value="1"/>
</dbReference>
<dbReference type="PANTHER" id="PTHR45633">
    <property type="entry name" value="60 KDA HEAT SHOCK PROTEIN, MITOCHONDRIAL"/>
    <property type="match status" value="1"/>
</dbReference>
<dbReference type="Pfam" id="PF00118">
    <property type="entry name" value="Cpn60_TCP1"/>
    <property type="match status" value="1"/>
</dbReference>
<dbReference type="PRINTS" id="PR00298">
    <property type="entry name" value="CHAPERONIN60"/>
</dbReference>
<dbReference type="SUPFAM" id="SSF52029">
    <property type="entry name" value="GroEL apical domain-like"/>
    <property type="match status" value="1"/>
</dbReference>
<dbReference type="SUPFAM" id="SSF48592">
    <property type="entry name" value="GroEL equatorial domain-like"/>
    <property type="match status" value="1"/>
</dbReference>
<dbReference type="SUPFAM" id="SSF54849">
    <property type="entry name" value="GroEL-intermediate domain like"/>
    <property type="match status" value="1"/>
</dbReference>
<dbReference type="PROSITE" id="PS00296">
    <property type="entry name" value="CHAPERONINS_CPN60"/>
    <property type="match status" value="1"/>
</dbReference>
<reference key="1">
    <citation type="submission" date="2006-08" db="EMBL/GenBank/DDBJ databases">
        <title>Complete sequence of chromosome 2 of Burkholderia cepacia AMMD.</title>
        <authorList>
            <person name="Copeland A."/>
            <person name="Lucas S."/>
            <person name="Lapidus A."/>
            <person name="Barry K."/>
            <person name="Detter J.C."/>
            <person name="Glavina del Rio T."/>
            <person name="Hammon N."/>
            <person name="Israni S."/>
            <person name="Pitluck S."/>
            <person name="Bruce D."/>
            <person name="Chain P."/>
            <person name="Malfatti S."/>
            <person name="Shin M."/>
            <person name="Vergez L."/>
            <person name="Schmutz J."/>
            <person name="Larimer F."/>
            <person name="Land M."/>
            <person name="Hauser L."/>
            <person name="Kyrpides N."/>
            <person name="Kim E."/>
            <person name="Parke J."/>
            <person name="Coenye T."/>
            <person name="Konstantinidis K."/>
            <person name="Ramette A."/>
            <person name="Tiedje J."/>
            <person name="Richardson P."/>
        </authorList>
    </citation>
    <scope>NUCLEOTIDE SEQUENCE [LARGE SCALE GENOMIC DNA]</scope>
    <source>
        <strain>ATCC BAA-244 / DSM 16087 / CCUG 44356 / LMG 19182 / AMMD</strain>
    </source>
</reference>
<name>CH602_BURCM</name>
<keyword id="KW-0067">ATP-binding</keyword>
<keyword id="KW-0143">Chaperone</keyword>
<keyword id="KW-0963">Cytoplasm</keyword>
<keyword id="KW-0413">Isomerase</keyword>
<keyword id="KW-0547">Nucleotide-binding</keyword>
<comment type="function">
    <text evidence="1">Together with its co-chaperonin GroES, plays an essential role in assisting protein folding. The GroEL-GroES system forms a nano-cage that allows encapsulation of the non-native substrate proteins and provides a physical environment optimized to promote and accelerate protein folding.</text>
</comment>
<comment type="catalytic activity">
    <reaction evidence="1">
        <text>ATP + H2O + a folded polypeptide = ADP + phosphate + an unfolded polypeptide.</text>
        <dbReference type="EC" id="5.6.1.7"/>
    </reaction>
</comment>
<comment type="subunit">
    <text evidence="1">Forms a cylinder of 14 subunits composed of two heptameric rings stacked back-to-back. Interacts with the co-chaperonin GroES.</text>
</comment>
<comment type="subcellular location">
    <subcellularLocation>
        <location evidence="1">Cytoplasm</location>
    </subcellularLocation>
</comment>
<comment type="similarity">
    <text evidence="1">Belongs to the chaperonin (HSP60) family.</text>
</comment>
<accession>Q0B4V5</accession>
<protein>
    <recommendedName>
        <fullName evidence="1">Chaperonin GroEL 2</fullName>
        <ecNumber evidence="1">5.6.1.7</ecNumber>
    </recommendedName>
    <alternativeName>
        <fullName evidence="1">60 kDa chaperonin 2</fullName>
    </alternativeName>
    <alternativeName>
        <fullName evidence="1">Chaperonin-60 2</fullName>
        <shortName evidence="1">Cpn60 2</shortName>
    </alternativeName>
</protein>
<evidence type="ECO:0000255" key="1">
    <source>
        <dbReference type="HAMAP-Rule" id="MF_00600"/>
    </source>
</evidence>
<evidence type="ECO:0000256" key="2">
    <source>
        <dbReference type="SAM" id="MobiDB-lite"/>
    </source>
</evidence>
<organism>
    <name type="scientific">Burkholderia ambifaria (strain ATCC BAA-244 / DSM 16087 / CCUG 44356 / LMG 19182 / AMMD)</name>
    <name type="common">Burkholderia cepacia (strain AMMD)</name>
    <dbReference type="NCBI Taxonomy" id="339670"/>
    <lineage>
        <taxon>Bacteria</taxon>
        <taxon>Pseudomonadati</taxon>
        <taxon>Pseudomonadota</taxon>
        <taxon>Betaproteobacteria</taxon>
        <taxon>Burkholderiales</taxon>
        <taxon>Burkholderiaceae</taxon>
        <taxon>Burkholderia</taxon>
        <taxon>Burkholderia cepacia complex</taxon>
    </lineage>
</organism>